<dbReference type="EMBL" id="AE001437">
    <property type="protein sequence ID" value="AAK81103.1"/>
    <property type="molecule type" value="Genomic_DNA"/>
</dbReference>
<dbReference type="PIR" id="D97289">
    <property type="entry name" value="D97289"/>
</dbReference>
<dbReference type="RefSeq" id="NP_349763.1">
    <property type="nucleotide sequence ID" value="NC_003030.1"/>
</dbReference>
<dbReference type="RefSeq" id="WP_010966443.1">
    <property type="nucleotide sequence ID" value="NC_003030.1"/>
</dbReference>
<dbReference type="STRING" id="272562.CA_C3166"/>
<dbReference type="KEGG" id="cac:CA_C3166"/>
<dbReference type="PATRIC" id="fig|272562.8.peg.3347"/>
<dbReference type="eggNOG" id="COG1342">
    <property type="taxonomic scope" value="Bacteria"/>
</dbReference>
<dbReference type="HOGENOM" id="CLU_094511_0_1_9"/>
<dbReference type="OrthoDB" id="280278at2"/>
<dbReference type="Proteomes" id="UP000000814">
    <property type="component" value="Chromosome"/>
</dbReference>
<dbReference type="HAMAP" id="MF_00674">
    <property type="entry name" value="UPF0251"/>
    <property type="match status" value="1"/>
</dbReference>
<dbReference type="InterPro" id="IPR002852">
    <property type="entry name" value="UPF0251"/>
</dbReference>
<dbReference type="PANTHER" id="PTHR37478">
    <property type="match status" value="1"/>
</dbReference>
<dbReference type="PANTHER" id="PTHR37478:SF2">
    <property type="entry name" value="UPF0251 PROTEIN TK0562"/>
    <property type="match status" value="1"/>
</dbReference>
<dbReference type="Pfam" id="PF02001">
    <property type="entry name" value="DUF134"/>
    <property type="match status" value="1"/>
</dbReference>
<name>Y3166_CLOAB</name>
<evidence type="ECO:0000305" key="1"/>
<keyword id="KW-1185">Reference proteome</keyword>
<sequence length="143" mass="16123">MSRPTKFRKVDFFPKSTCFIPLGKPKCEVEEIALKIEELEAIRLKDIKELNQEECAAKMEVSRQTFQNIIDSARKKIAIALTEGNAIAIGGGNFKSKFCKFKCLDCRNTYEINCENDKHMCPSCGSNNIVCNKKTGSCENLCK</sequence>
<reference key="1">
    <citation type="journal article" date="2001" name="J. Bacteriol.">
        <title>Genome sequence and comparative analysis of the solvent-producing bacterium Clostridium acetobutylicum.</title>
        <authorList>
            <person name="Noelling J."/>
            <person name="Breton G."/>
            <person name="Omelchenko M.V."/>
            <person name="Makarova K.S."/>
            <person name="Zeng Q."/>
            <person name="Gibson R."/>
            <person name="Lee H.M."/>
            <person name="Dubois J."/>
            <person name="Qiu D."/>
            <person name="Hitti J."/>
            <person name="Wolf Y.I."/>
            <person name="Tatusov R.L."/>
            <person name="Sabathe F."/>
            <person name="Doucette-Stamm L.A."/>
            <person name="Soucaille P."/>
            <person name="Daly M.J."/>
            <person name="Bennett G.N."/>
            <person name="Koonin E.V."/>
            <person name="Smith D.R."/>
        </authorList>
    </citation>
    <scope>NUCLEOTIDE SEQUENCE [LARGE SCALE GENOMIC DNA]</scope>
    <source>
        <strain>ATCC 824 / DSM 792 / JCM 1419 / IAM 19013 / LMG 5710 / NBRC 13948 / NRRL B-527 / VKM B-1787 / 2291 / W</strain>
    </source>
</reference>
<accession>Q97EE7</accession>
<proteinExistence type="inferred from homology"/>
<feature type="chain" id="PRO_0000147588" description="UPF0251 protein CA_C3166">
    <location>
        <begin position="1"/>
        <end position="143"/>
    </location>
</feature>
<comment type="similarity">
    <text evidence="1">Belongs to the UPF0251 family.</text>
</comment>
<organism>
    <name type="scientific">Clostridium acetobutylicum (strain ATCC 824 / DSM 792 / JCM 1419 / IAM 19013 / LMG 5710 / NBRC 13948 / NRRL B-527 / VKM B-1787 / 2291 / W)</name>
    <dbReference type="NCBI Taxonomy" id="272562"/>
    <lineage>
        <taxon>Bacteria</taxon>
        <taxon>Bacillati</taxon>
        <taxon>Bacillota</taxon>
        <taxon>Clostridia</taxon>
        <taxon>Eubacteriales</taxon>
        <taxon>Clostridiaceae</taxon>
        <taxon>Clostridium</taxon>
    </lineage>
</organism>
<protein>
    <recommendedName>
        <fullName>UPF0251 protein CA_C3166</fullName>
    </recommendedName>
</protein>
<gene>
    <name type="ordered locus">CA_C3166</name>
</gene>